<keyword id="KW-0378">Hydrolase</keyword>
<organism>
    <name type="scientific">Rhodopseudomonas palustris (strain ATCC BAA-98 / CGA009)</name>
    <dbReference type="NCBI Taxonomy" id="258594"/>
    <lineage>
        <taxon>Bacteria</taxon>
        <taxon>Pseudomonadati</taxon>
        <taxon>Pseudomonadota</taxon>
        <taxon>Alphaproteobacteria</taxon>
        <taxon>Hyphomicrobiales</taxon>
        <taxon>Nitrobacteraceae</taxon>
        <taxon>Rhodopseudomonas</taxon>
    </lineage>
</organism>
<protein>
    <recommendedName>
        <fullName>Acylphosphatase</fullName>
        <ecNumber>3.6.1.7</ecNumber>
    </recommendedName>
    <alternativeName>
        <fullName>Acylphosphate phosphohydrolase</fullName>
    </alternativeName>
</protein>
<reference key="1">
    <citation type="journal article" date="2004" name="Nat. Biotechnol.">
        <title>Complete genome sequence of the metabolically versatile photosynthetic bacterium Rhodopseudomonas palustris.</title>
        <authorList>
            <person name="Larimer F.W."/>
            <person name="Chain P."/>
            <person name="Hauser L."/>
            <person name="Lamerdin J.E."/>
            <person name="Malfatti S."/>
            <person name="Do L."/>
            <person name="Land M.L."/>
            <person name="Pelletier D.A."/>
            <person name="Beatty J.T."/>
            <person name="Lang A.S."/>
            <person name="Tabita F.R."/>
            <person name="Gibson J.L."/>
            <person name="Hanson T.E."/>
            <person name="Bobst C."/>
            <person name="Torres y Torres J.L."/>
            <person name="Peres C."/>
            <person name="Harrison F.H."/>
            <person name="Gibson J."/>
            <person name="Harwood C.S."/>
        </authorList>
    </citation>
    <scope>NUCLEOTIDE SEQUENCE [LARGE SCALE GENOMIC DNA]</scope>
    <source>
        <strain>ATCC BAA-98 / CGA009</strain>
    </source>
</reference>
<proteinExistence type="inferred from homology"/>
<evidence type="ECO:0000255" key="1">
    <source>
        <dbReference type="PROSITE-ProRule" id="PRU00520"/>
    </source>
</evidence>
<evidence type="ECO:0000305" key="2"/>
<sequence length="99" mass="10781">MSEIIRQVMISGRVQGVGYRAWLAHTAEAMGLHGWVRNRRDGSVEAVLAGSEPIVSEMIARCQRGPSAARVEAVVAEIAQPDVLNLRQPGERFSILSTL</sequence>
<accession>Q6N510</accession>
<feature type="chain" id="PRO_0000326785" description="Acylphosphatase">
    <location>
        <begin position="1"/>
        <end position="99"/>
    </location>
</feature>
<feature type="domain" description="Acylphosphatase-like" evidence="1">
    <location>
        <begin position="5"/>
        <end position="97"/>
    </location>
</feature>
<feature type="active site" evidence="1">
    <location>
        <position position="20"/>
    </location>
</feature>
<feature type="active site" evidence="1">
    <location>
        <position position="38"/>
    </location>
</feature>
<gene>
    <name type="primary">acyP</name>
    <name type="ordered locus">RPA3173</name>
</gene>
<dbReference type="EC" id="3.6.1.7"/>
<dbReference type="EMBL" id="BX572603">
    <property type="protein sequence ID" value="CAE28614.1"/>
    <property type="molecule type" value="Genomic_DNA"/>
</dbReference>
<dbReference type="RefSeq" id="WP_011158718.1">
    <property type="nucleotide sequence ID" value="NZ_CP116810.1"/>
</dbReference>
<dbReference type="SMR" id="Q6N510"/>
<dbReference type="STRING" id="258594.RPA3173"/>
<dbReference type="GeneID" id="66894257"/>
<dbReference type="eggNOG" id="COG1254">
    <property type="taxonomic scope" value="Bacteria"/>
</dbReference>
<dbReference type="HOGENOM" id="CLU_141932_3_2_5"/>
<dbReference type="PhylomeDB" id="Q6N510"/>
<dbReference type="GO" id="GO:0003998">
    <property type="term" value="F:acylphosphatase activity"/>
    <property type="evidence" value="ECO:0007669"/>
    <property type="project" value="UniProtKB-EC"/>
</dbReference>
<dbReference type="Gene3D" id="3.30.70.100">
    <property type="match status" value="1"/>
</dbReference>
<dbReference type="InterPro" id="IPR020456">
    <property type="entry name" value="Acylphosphatase"/>
</dbReference>
<dbReference type="InterPro" id="IPR001792">
    <property type="entry name" value="Acylphosphatase-like_dom"/>
</dbReference>
<dbReference type="InterPro" id="IPR036046">
    <property type="entry name" value="Acylphosphatase-like_dom_sf"/>
</dbReference>
<dbReference type="InterPro" id="IPR017968">
    <property type="entry name" value="Acylphosphatase_CS"/>
</dbReference>
<dbReference type="NCBIfam" id="NF010996">
    <property type="entry name" value="PRK14421.1"/>
    <property type="match status" value="1"/>
</dbReference>
<dbReference type="PANTHER" id="PTHR47268">
    <property type="entry name" value="ACYLPHOSPHATASE"/>
    <property type="match status" value="1"/>
</dbReference>
<dbReference type="PANTHER" id="PTHR47268:SF4">
    <property type="entry name" value="ACYLPHOSPHATASE"/>
    <property type="match status" value="1"/>
</dbReference>
<dbReference type="Pfam" id="PF00708">
    <property type="entry name" value="Acylphosphatase"/>
    <property type="match status" value="1"/>
</dbReference>
<dbReference type="SUPFAM" id="SSF54975">
    <property type="entry name" value="Acylphosphatase/BLUF domain-like"/>
    <property type="match status" value="1"/>
</dbReference>
<dbReference type="PROSITE" id="PS00151">
    <property type="entry name" value="ACYLPHOSPHATASE_2"/>
    <property type="match status" value="1"/>
</dbReference>
<dbReference type="PROSITE" id="PS51160">
    <property type="entry name" value="ACYLPHOSPHATASE_3"/>
    <property type="match status" value="1"/>
</dbReference>
<comment type="catalytic activity">
    <reaction>
        <text>an acyl phosphate + H2O = a carboxylate + phosphate + H(+)</text>
        <dbReference type="Rhea" id="RHEA:14965"/>
        <dbReference type="ChEBI" id="CHEBI:15377"/>
        <dbReference type="ChEBI" id="CHEBI:15378"/>
        <dbReference type="ChEBI" id="CHEBI:29067"/>
        <dbReference type="ChEBI" id="CHEBI:43474"/>
        <dbReference type="ChEBI" id="CHEBI:59918"/>
        <dbReference type="EC" id="3.6.1.7"/>
    </reaction>
</comment>
<comment type="similarity">
    <text evidence="2">Belongs to the acylphosphatase family.</text>
</comment>
<name>ACYP_RHOPA</name>